<protein>
    <recommendedName>
        <fullName evidence="1">YcgL domain-containing protein VV1058</fullName>
    </recommendedName>
</protein>
<sequence length="93" mass="10682">MLCSIYKSSKKEGTYLYIPKKDDFSQVPDTLMQMFGKPSHVMTVNLEGRSLALVNIEKVKESLSNEGFFLQLPPPPENLLQQHKERKAQQKND</sequence>
<organism>
    <name type="scientific">Vibrio vulnificus (strain YJ016)</name>
    <dbReference type="NCBI Taxonomy" id="196600"/>
    <lineage>
        <taxon>Bacteria</taxon>
        <taxon>Pseudomonadati</taxon>
        <taxon>Pseudomonadota</taxon>
        <taxon>Gammaproteobacteria</taxon>
        <taxon>Vibrionales</taxon>
        <taxon>Vibrionaceae</taxon>
        <taxon>Vibrio</taxon>
    </lineage>
</organism>
<accession>Q7MMK9</accession>
<evidence type="ECO:0000255" key="1">
    <source>
        <dbReference type="HAMAP-Rule" id="MF_01866"/>
    </source>
</evidence>
<evidence type="ECO:0000256" key="2">
    <source>
        <dbReference type="SAM" id="MobiDB-lite"/>
    </source>
</evidence>
<reference key="1">
    <citation type="journal article" date="2003" name="Genome Res.">
        <title>Comparative genome analysis of Vibrio vulnificus, a marine pathogen.</title>
        <authorList>
            <person name="Chen C.-Y."/>
            <person name="Wu K.-M."/>
            <person name="Chang Y.-C."/>
            <person name="Chang C.-H."/>
            <person name="Tsai H.-C."/>
            <person name="Liao T.-L."/>
            <person name="Liu Y.-M."/>
            <person name="Chen H.-J."/>
            <person name="Shen A.B.-T."/>
            <person name="Li J.-C."/>
            <person name="Su T.-L."/>
            <person name="Shao C.-P."/>
            <person name="Lee C.-T."/>
            <person name="Hor L.-I."/>
            <person name="Tsai S.-F."/>
        </authorList>
    </citation>
    <scope>NUCLEOTIDE SEQUENCE [LARGE SCALE GENOMIC DNA]</scope>
    <source>
        <strain>YJ016</strain>
    </source>
</reference>
<gene>
    <name type="ordered locus">VV1058</name>
</gene>
<name>Y1058_VIBVY</name>
<proteinExistence type="inferred from homology"/>
<feature type="chain" id="PRO_0000375401" description="YcgL domain-containing protein VV1058">
    <location>
        <begin position="1"/>
        <end position="93"/>
    </location>
</feature>
<feature type="domain" description="YcgL" evidence="1">
    <location>
        <begin position="1"/>
        <end position="84"/>
    </location>
</feature>
<feature type="region of interest" description="Disordered" evidence="2">
    <location>
        <begin position="74"/>
        <end position="93"/>
    </location>
</feature>
<dbReference type="EMBL" id="BA000037">
    <property type="protein sequence ID" value="BAC93822.1"/>
    <property type="molecule type" value="Genomic_DNA"/>
</dbReference>
<dbReference type="RefSeq" id="WP_011149812.1">
    <property type="nucleotide sequence ID" value="NC_005139.1"/>
</dbReference>
<dbReference type="SMR" id="Q7MMK9"/>
<dbReference type="STRING" id="672.VV93_v1c09810"/>
<dbReference type="KEGG" id="vvy:VV1058"/>
<dbReference type="PATRIC" id="fig|196600.6.peg.1055"/>
<dbReference type="eggNOG" id="COG3100">
    <property type="taxonomic scope" value="Bacteria"/>
</dbReference>
<dbReference type="HOGENOM" id="CLU_155118_1_0_6"/>
<dbReference type="Proteomes" id="UP000002675">
    <property type="component" value="Chromosome I"/>
</dbReference>
<dbReference type="Gene3D" id="3.10.510.20">
    <property type="entry name" value="YcgL domain"/>
    <property type="match status" value="1"/>
</dbReference>
<dbReference type="HAMAP" id="MF_01866">
    <property type="entry name" value="UPF0745"/>
    <property type="match status" value="1"/>
</dbReference>
<dbReference type="InterPro" id="IPR038068">
    <property type="entry name" value="YcgL-like_sf"/>
</dbReference>
<dbReference type="InterPro" id="IPR027354">
    <property type="entry name" value="YcgL_dom"/>
</dbReference>
<dbReference type="PANTHER" id="PTHR38109">
    <property type="entry name" value="PROTEIN YCGL"/>
    <property type="match status" value="1"/>
</dbReference>
<dbReference type="PANTHER" id="PTHR38109:SF1">
    <property type="entry name" value="PROTEIN YCGL"/>
    <property type="match status" value="1"/>
</dbReference>
<dbReference type="Pfam" id="PF05166">
    <property type="entry name" value="YcgL"/>
    <property type="match status" value="1"/>
</dbReference>
<dbReference type="SUPFAM" id="SSF160191">
    <property type="entry name" value="YcgL-like"/>
    <property type="match status" value="1"/>
</dbReference>
<dbReference type="PROSITE" id="PS51648">
    <property type="entry name" value="YCGL"/>
    <property type="match status" value="1"/>
</dbReference>